<protein>
    <recommendedName>
        <fullName evidence="2">Photosystem II D2 protein</fullName>
        <shortName evidence="2">PSII D2 protein</shortName>
        <ecNumber evidence="2">1.10.3.9</ecNumber>
    </recommendedName>
    <alternativeName>
        <fullName evidence="2">Photosystem Q(A) protein</fullName>
    </alternativeName>
</protein>
<evidence type="ECO:0000250" key="1">
    <source>
        <dbReference type="UniProtKB" id="P56761"/>
    </source>
</evidence>
<evidence type="ECO:0000255" key="2">
    <source>
        <dbReference type="HAMAP-Rule" id="MF_01383"/>
    </source>
</evidence>
<evidence type="ECO:0000305" key="3"/>
<name>PSBD_CUSRE</name>
<proteinExistence type="inferred from homology"/>
<organism>
    <name type="scientific">Cuscuta reflexa</name>
    <name type="common">Southern Asian dodder</name>
    <dbReference type="NCBI Taxonomy" id="4129"/>
    <lineage>
        <taxon>Eukaryota</taxon>
        <taxon>Viridiplantae</taxon>
        <taxon>Streptophyta</taxon>
        <taxon>Embryophyta</taxon>
        <taxon>Tracheophyta</taxon>
        <taxon>Spermatophyta</taxon>
        <taxon>Magnoliopsida</taxon>
        <taxon>eudicotyledons</taxon>
        <taxon>Gunneridae</taxon>
        <taxon>Pentapetalae</taxon>
        <taxon>asterids</taxon>
        <taxon>lamiids</taxon>
        <taxon>Solanales</taxon>
        <taxon>Convolvulaceae</taxon>
        <taxon>Cuscuteae</taxon>
        <taxon>Cuscuta</taxon>
        <taxon>Cuscuta subgen. Monogynella</taxon>
    </lineage>
</organism>
<comment type="function">
    <text evidence="2">Photosystem II (PSII) is a light-driven water:plastoquinone oxidoreductase that uses light energy to abstract electrons from H(2)O, generating O(2) and a proton gradient subsequently used for ATP formation. It consists of a core antenna complex that captures photons, and an electron transfer chain that converts photonic excitation into a charge separation. The D1/D2 (PsbA/PsbD) reaction center heterodimer binds P680, the primary electron donor of PSII as well as several subsequent electron acceptors. D2 is needed for assembly of a stable PSII complex.</text>
</comment>
<comment type="catalytic activity">
    <reaction evidence="2">
        <text>2 a plastoquinone + 4 hnu + 2 H2O = 2 a plastoquinol + O2</text>
        <dbReference type="Rhea" id="RHEA:36359"/>
        <dbReference type="Rhea" id="RHEA-COMP:9561"/>
        <dbReference type="Rhea" id="RHEA-COMP:9562"/>
        <dbReference type="ChEBI" id="CHEBI:15377"/>
        <dbReference type="ChEBI" id="CHEBI:15379"/>
        <dbReference type="ChEBI" id="CHEBI:17757"/>
        <dbReference type="ChEBI" id="CHEBI:30212"/>
        <dbReference type="ChEBI" id="CHEBI:62192"/>
        <dbReference type="EC" id="1.10.3.9"/>
    </reaction>
</comment>
<comment type="cofactor">
    <text evidence="2">The D1/D2 heterodimer binds P680, chlorophylls that are the primary electron donor of PSII, and subsequent electron acceptors. It shares a non-heme iron and each subunit binds pheophytin, quinone, additional chlorophylls, carotenoids and lipids. There is also a Cl(-1) ion associated with D1 and D2, which is required for oxygen evolution. The PSII complex binds additional chlorophylls, carotenoids and specific lipids.</text>
</comment>
<comment type="subunit">
    <text evidence="2">PSII is composed of 1 copy each of membrane proteins PsbA, PsbB, PsbC, PsbD, PsbE, PsbF, PsbH, PsbI, PsbJ, PsbK, PsbL, PsbM, PsbT, PsbX, PsbY, PsbZ, Psb30/Ycf12, at least 3 peripheral proteins of the oxygen-evolving complex and a large number of cofactors. It forms dimeric complexes.</text>
</comment>
<comment type="subcellular location">
    <subcellularLocation>
        <location evidence="3">Plastid membrane</location>
        <topology evidence="3">Multi-pass membrane protein</topology>
    </subcellularLocation>
</comment>
<comment type="miscellaneous">
    <text evidence="2">2 of the reaction center chlorophylls (ChlD1 and ChlD2) are entirely coordinated by water.</text>
</comment>
<comment type="similarity">
    <text evidence="2 3">Belongs to the reaction center PufL/M/PsbA/D family.</text>
</comment>
<comment type="caution">
    <text evidence="3">Young tissue from this organism is photosynthetic and contains some thylakoids, although the photosynthetic activity does not exceed the light compensation point.</text>
</comment>
<geneLocation type="plastid"/>
<sequence>MTIALGKLTKDEKDLFDTMDDWLRRDRFIFVGWSGLLLFPCAYFALGGWFTGTTFVTSWYTHGLASSYLEGCNFLTAAVSTPANSLAHSLLFLWGPEAQGDFTRWCQLGGLWTFVALHGAFGLIGFMLRQFELARSVQLRPYNAIAFSAPIAVFISVFFIYPLGQSGWFFAPSFGVAAIFRFILFFQGFHNWTLNPFHMMGVAGVLGAALLCAIHGATVENTLFEDGDGANTFRAFNPTQSEETYSMVTANRFWSQIFGVAFSNKRWLHFFMLFVPVTGLWMSALGVVGLALNLRAYDFVSQEIRAAEDPEFETFYTKNILLNEGIRAWMAAQDQPHENLIFPEEVLPRGNAL</sequence>
<keyword id="KW-0007">Acetylation</keyword>
<keyword id="KW-0148">Chlorophyll</keyword>
<keyword id="KW-0157">Chromophore</keyword>
<keyword id="KW-0249">Electron transport</keyword>
<keyword id="KW-0408">Iron</keyword>
<keyword id="KW-0460">Magnesium</keyword>
<keyword id="KW-0472">Membrane</keyword>
<keyword id="KW-0479">Metal-binding</keyword>
<keyword id="KW-0560">Oxidoreductase</keyword>
<keyword id="KW-0597">Phosphoprotein</keyword>
<keyword id="KW-0602">Photosynthesis</keyword>
<keyword id="KW-0604">Photosystem II</keyword>
<keyword id="KW-0934">Plastid</keyword>
<keyword id="KW-0812">Transmembrane</keyword>
<keyword id="KW-1133">Transmembrane helix</keyword>
<keyword id="KW-0813">Transport</keyword>
<reference key="1">
    <citation type="journal article" date="2007" name="BMC Plant Biol.">
        <title>Complete DNA sequences of the plastid genomes of two parasitic flowering plant species, Cuscuta reflexa and Cuscuta gronovii.</title>
        <authorList>
            <person name="Funk H.T."/>
            <person name="Berg S."/>
            <person name="Krupinska K."/>
            <person name="Maier U.-G."/>
            <person name="Krause K."/>
        </authorList>
    </citation>
    <scope>NUCLEOTIDE SEQUENCE [LARGE SCALE GENOMIC DNA]</scope>
</reference>
<feature type="initiator methionine" description="Removed" evidence="1">
    <location>
        <position position="1"/>
    </location>
</feature>
<feature type="chain" id="PRO_0000359644" description="Photosystem II D2 protein">
    <location>
        <begin position="2"/>
        <end position="353"/>
    </location>
</feature>
<feature type="transmembrane region" description="Helical" evidence="2">
    <location>
        <begin position="41"/>
        <end position="61"/>
    </location>
</feature>
<feature type="transmembrane region" description="Helical" evidence="2">
    <location>
        <begin position="125"/>
        <end position="141"/>
    </location>
</feature>
<feature type="transmembrane region" description="Helical" evidence="2">
    <location>
        <begin position="153"/>
        <end position="166"/>
    </location>
</feature>
<feature type="transmembrane region" description="Helical" evidence="2">
    <location>
        <begin position="208"/>
        <end position="228"/>
    </location>
</feature>
<feature type="transmembrane region" description="Helical" evidence="2">
    <location>
        <begin position="279"/>
        <end position="295"/>
    </location>
</feature>
<feature type="binding site" description="axial binding residue" evidence="2">
    <location>
        <position position="118"/>
    </location>
    <ligand>
        <name>chlorophyll a</name>
        <dbReference type="ChEBI" id="CHEBI:58416"/>
        <label>ChlzD2</label>
    </ligand>
    <ligandPart>
        <name>Mg</name>
        <dbReference type="ChEBI" id="CHEBI:25107"/>
    </ligandPart>
</feature>
<feature type="binding site" evidence="2">
    <location>
        <position position="130"/>
    </location>
    <ligand>
        <name>pheophytin a</name>
        <dbReference type="ChEBI" id="CHEBI:136840"/>
        <label>D2</label>
    </ligand>
</feature>
<feature type="binding site" evidence="2">
    <location>
        <position position="143"/>
    </location>
    <ligand>
        <name>pheophytin a</name>
        <dbReference type="ChEBI" id="CHEBI:136840"/>
        <label>D2</label>
    </ligand>
</feature>
<feature type="binding site" description="axial binding residue" evidence="2">
    <location>
        <position position="198"/>
    </location>
    <ligand>
        <name>chlorophyll a</name>
        <dbReference type="ChEBI" id="CHEBI:58416"/>
        <label>PD2</label>
    </ligand>
    <ligandPart>
        <name>Mg</name>
        <dbReference type="ChEBI" id="CHEBI:25107"/>
    </ligandPart>
</feature>
<feature type="binding site" evidence="2">
    <location>
        <position position="215"/>
    </location>
    <ligand>
        <name>a plastoquinone</name>
        <dbReference type="ChEBI" id="CHEBI:17757"/>
        <label>Q(A)</label>
    </ligand>
</feature>
<feature type="binding site" evidence="2">
    <location>
        <position position="215"/>
    </location>
    <ligand>
        <name>Fe cation</name>
        <dbReference type="ChEBI" id="CHEBI:24875"/>
        <note>ligand shared with heterodimeric partner</note>
    </ligand>
</feature>
<feature type="binding site" evidence="2">
    <location>
        <position position="262"/>
    </location>
    <ligand>
        <name>a plastoquinone</name>
        <dbReference type="ChEBI" id="CHEBI:17757"/>
        <label>Q(A)</label>
    </ligand>
</feature>
<feature type="binding site" evidence="2">
    <location>
        <position position="269"/>
    </location>
    <ligand>
        <name>Fe cation</name>
        <dbReference type="ChEBI" id="CHEBI:24875"/>
        <note>ligand shared with heterodimeric partner</note>
    </ligand>
</feature>
<feature type="modified residue" description="N-acetylthreonine" evidence="1">
    <location>
        <position position="2"/>
    </location>
</feature>
<feature type="modified residue" description="Phosphothreonine" evidence="1">
    <location>
        <position position="2"/>
    </location>
</feature>
<gene>
    <name evidence="2" type="primary">psbD</name>
</gene>
<dbReference type="EC" id="1.10.3.9" evidence="2"/>
<dbReference type="EMBL" id="AM711640">
    <property type="protein sequence ID" value="CAM98389.1"/>
    <property type="molecule type" value="Genomic_DNA"/>
</dbReference>
<dbReference type="RefSeq" id="YP_001430103.1">
    <property type="nucleotide sequence ID" value="NC_009766.1"/>
</dbReference>
<dbReference type="SMR" id="A7M961"/>
<dbReference type="GeneID" id="5536645"/>
<dbReference type="GO" id="GO:0009535">
    <property type="term" value="C:chloroplast thylakoid membrane"/>
    <property type="evidence" value="ECO:0007669"/>
    <property type="project" value="TreeGrafter"/>
</dbReference>
<dbReference type="GO" id="GO:0009523">
    <property type="term" value="C:photosystem II"/>
    <property type="evidence" value="ECO:0007669"/>
    <property type="project" value="UniProtKB-KW"/>
</dbReference>
<dbReference type="GO" id="GO:0016168">
    <property type="term" value="F:chlorophyll binding"/>
    <property type="evidence" value="ECO:0007669"/>
    <property type="project" value="UniProtKB-UniRule"/>
</dbReference>
<dbReference type="GO" id="GO:0045156">
    <property type="term" value="F:electron transporter, transferring electrons within the cyclic electron transport pathway of photosynthesis activity"/>
    <property type="evidence" value="ECO:0007669"/>
    <property type="project" value="InterPro"/>
</dbReference>
<dbReference type="GO" id="GO:0005506">
    <property type="term" value="F:iron ion binding"/>
    <property type="evidence" value="ECO:0007669"/>
    <property type="project" value="UniProtKB-UniRule"/>
</dbReference>
<dbReference type="GO" id="GO:0010242">
    <property type="term" value="F:oxygen evolving activity"/>
    <property type="evidence" value="ECO:0007669"/>
    <property type="project" value="UniProtKB-EC"/>
</dbReference>
<dbReference type="GO" id="GO:0009772">
    <property type="term" value="P:photosynthetic electron transport in photosystem II"/>
    <property type="evidence" value="ECO:0007669"/>
    <property type="project" value="InterPro"/>
</dbReference>
<dbReference type="CDD" id="cd09288">
    <property type="entry name" value="Photosystem-II_D2"/>
    <property type="match status" value="1"/>
</dbReference>
<dbReference type="FunFam" id="1.20.85.10:FF:000001">
    <property type="entry name" value="photosystem II D2 protein-like"/>
    <property type="match status" value="1"/>
</dbReference>
<dbReference type="Gene3D" id="1.20.85.10">
    <property type="entry name" value="Photosystem II protein D1-like"/>
    <property type="match status" value="1"/>
</dbReference>
<dbReference type="HAMAP" id="MF_01383">
    <property type="entry name" value="PSII_PsbD_D2"/>
    <property type="match status" value="1"/>
</dbReference>
<dbReference type="InterPro" id="IPR055266">
    <property type="entry name" value="D1/D2"/>
</dbReference>
<dbReference type="InterPro" id="IPR036854">
    <property type="entry name" value="Photo_II_D1/D2_sf"/>
</dbReference>
<dbReference type="InterPro" id="IPR000484">
    <property type="entry name" value="Photo_RC_L/M"/>
</dbReference>
<dbReference type="InterPro" id="IPR055265">
    <property type="entry name" value="Photo_RC_L/M_CS"/>
</dbReference>
<dbReference type="InterPro" id="IPR005868">
    <property type="entry name" value="PSII_PsbD/D2"/>
</dbReference>
<dbReference type="NCBIfam" id="TIGR01152">
    <property type="entry name" value="psbD"/>
    <property type="match status" value="1"/>
</dbReference>
<dbReference type="PANTHER" id="PTHR33149:SF57">
    <property type="entry name" value="PHOTOSYSTEM II D2 PROTEIN"/>
    <property type="match status" value="1"/>
</dbReference>
<dbReference type="PANTHER" id="PTHR33149">
    <property type="entry name" value="PHOTOSYSTEM II PROTEIN D1"/>
    <property type="match status" value="1"/>
</dbReference>
<dbReference type="Pfam" id="PF00124">
    <property type="entry name" value="Photo_RC"/>
    <property type="match status" value="1"/>
</dbReference>
<dbReference type="PRINTS" id="PR00256">
    <property type="entry name" value="REACTNCENTRE"/>
</dbReference>
<dbReference type="SUPFAM" id="SSF81483">
    <property type="entry name" value="Bacterial photosystem II reaction centre, L and M subunits"/>
    <property type="match status" value="1"/>
</dbReference>
<dbReference type="PROSITE" id="PS00244">
    <property type="entry name" value="REACTION_CENTER"/>
    <property type="match status" value="1"/>
</dbReference>
<accession>A7M961</accession>